<dbReference type="EMBL" id="X60066">
    <property type="protein sequence ID" value="CAA42670.1"/>
    <property type="molecule type" value="mRNA"/>
</dbReference>
<dbReference type="PIR" id="B42192">
    <property type="entry name" value="MNXRSJ"/>
</dbReference>
<dbReference type="SMR" id="P30211"/>
<dbReference type="Proteomes" id="UP000006370">
    <property type="component" value="Genome"/>
</dbReference>
<dbReference type="GO" id="GO:0030430">
    <property type="term" value="C:host cell cytoplasm"/>
    <property type="evidence" value="ECO:0007669"/>
    <property type="project" value="UniProtKB-SubCell"/>
</dbReference>
<dbReference type="GO" id="GO:0042025">
    <property type="term" value="C:host cell nucleus"/>
    <property type="evidence" value="ECO:0007669"/>
    <property type="project" value="UniProtKB-SubCell"/>
</dbReference>
<dbReference type="GO" id="GO:0039624">
    <property type="term" value="C:viral outer capsid"/>
    <property type="evidence" value="ECO:0007669"/>
    <property type="project" value="UniProtKB-KW"/>
</dbReference>
<dbReference type="GO" id="GO:0030291">
    <property type="term" value="F:protein serine/threonine kinase inhibitor activity"/>
    <property type="evidence" value="ECO:0007669"/>
    <property type="project" value="UniProtKB-KW"/>
</dbReference>
<dbReference type="GO" id="GO:0003723">
    <property type="term" value="F:RNA binding"/>
    <property type="evidence" value="ECO:0007669"/>
    <property type="project" value="UniProtKB-KW"/>
</dbReference>
<dbReference type="GO" id="GO:0005198">
    <property type="term" value="F:structural molecule activity"/>
    <property type="evidence" value="ECO:0007669"/>
    <property type="project" value="InterPro"/>
</dbReference>
<dbReference type="GO" id="GO:0008270">
    <property type="term" value="F:zinc ion binding"/>
    <property type="evidence" value="ECO:0007669"/>
    <property type="project" value="UniProtKB-KW"/>
</dbReference>
<dbReference type="GO" id="GO:0006417">
    <property type="term" value="P:regulation of translation"/>
    <property type="evidence" value="ECO:0007669"/>
    <property type="project" value="UniProtKB-KW"/>
</dbReference>
<dbReference type="GO" id="GO:0052170">
    <property type="term" value="P:symbiont-mediated suppression of host innate immune response"/>
    <property type="evidence" value="ECO:0007669"/>
    <property type="project" value="UniProtKB-KW"/>
</dbReference>
<dbReference type="GO" id="GO:0039580">
    <property type="term" value="P:symbiont-mediated suppression of host PKR/eIFalpha signaling"/>
    <property type="evidence" value="ECO:0007669"/>
    <property type="project" value="UniProtKB-KW"/>
</dbReference>
<dbReference type="GO" id="GO:0039502">
    <property type="term" value="P:symbiont-mediated suppression of host type I interferon-mediated signaling pathway"/>
    <property type="evidence" value="ECO:0007669"/>
    <property type="project" value="UniProtKB-KW"/>
</dbReference>
<dbReference type="GO" id="GO:0019058">
    <property type="term" value="P:viral life cycle"/>
    <property type="evidence" value="ECO:0007669"/>
    <property type="project" value="InterPro"/>
</dbReference>
<dbReference type="Gene3D" id="3.90.1320.10">
    <property type="entry name" value="Outer-capsid protein sigma 3, large lobe"/>
    <property type="match status" value="1"/>
</dbReference>
<dbReference type="Gene3D" id="3.90.1630.10">
    <property type="entry name" value="Outer-capsid protein sigma 3, small lobe"/>
    <property type="match status" value="1"/>
</dbReference>
<dbReference type="InterPro" id="IPR000153">
    <property type="entry name" value="Reo_capsid_sigma3"/>
</dbReference>
<dbReference type="InterPro" id="IPR023634">
    <property type="entry name" value="Reovirus_capsid_sigma-3_dom_sf"/>
</dbReference>
<dbReference type="Pfam" id="PF00979">
    <property type="entry name" value="Reovirus_cap"/>
    <property type="match status" value="1"/>
</dbReference>
<dbReference type="SUPFAM" id="SSF64465">
    <property type="entry name" value="Outer capsid protein sigma 3"/>
    <property type="match status" value="1"/>
</dbReference>
<keyword id="KW-0167">Capsid protein</keyword>
<keyword id="KW-1035">Host cytoplasm</keyword>
<keyword id="KW-1048">Host nucleus</keyword>
<keyword id="KW-0945">Host-virus interaction</keyword>
<keyword id="KW-1090">Inhibition of host innate immune response by virus</keyword>
<keyword id="KW-1114">Inhibition of host interferon signaling pathway by virus</keyword>
<keyword id="KW-1102">Inhibition of host PKR by virus</keyword>
<keyword id="KW-0922">Interferon antiviral system evasion</keyword>
<keyword id="KW-0479">Metal-binding</keyword>
<keyword id="KW-1152">Outer capsid protein</keyword>
<keyword id="KW-0694">RNA-binding</keyword>
<keyword id="KW-0804">Transcription</keyword>
<keyword id="KW-0805">Transcription regulation</keyword>
<keyword id="KW-0810">Translation regulation</keyword>
<keyword id="KW-0899">Viral immunoevasion</keyword>
<keyword id="KW-0946">Virion</keyword>
<keyword id="KW-0862">Zinc</keyword>
<keyword id="KW-0863">Zinc-finger</keyword>
<evidence type="ECO:0000250" key="1"/>
<evidence type="ECO:0000250" key="2">
    <source>
        <dbReference type="UniProtKB" id="P03527"/>
    </source>
</evidence>
<evidence type="ECO:0000305" key="3"/>
<protein>
    <recommendedName>
        <fullName>Outer capsid protein sigma-3</fullName>
        <shortName>Sigma3</shortName>
    </recommendedName>
</protein>
<name>SIGM3_REOVJ</name>
<organismHost>
    <name type="scientific">Mammalia</name>
    <dbReference type="NCBI Taxonomy" id="40674"/>
</organismHost>
<reference key="1">
    <citation type="journal article" date="1992" name="Virology">
        <title>Translational effects and sequence comparisons of the three serotypes of the reovirus S4 gene.</title>
        <authorList>
            <person name="Seliger L.S."/>
            <person name="Giantini M."/>
            <person name="Shatkin A.J."/>
        </authorList>
    </citation>
    <scope>NUCLEOTIDE SEQUENCE [MRNA]</scope>
</reference>
<gene>
    <name type="primary">S4</name>
</gene>
<accession>P30211</accession>
<comment type="function">
    <text evidence="1">Stimulates translation by blocking the activation of the dsRNA-dependent protein kinase EIF2AK2/PKR, thereby inhibiting the host interferon response. Sigma3 prevents the activation of EIF2AK2 by competing with the kinase for dsRNA-binding (By similarity).</text>
</comment>
<comment type="function">
    <text evidence="1">The viral outer shell polypeptides, of which sigma-3 is one, impose structural constraints that prevent elongation of nascent transcripts by the RNA-dependent RNA polymerase lambda-3.</text>
</comment>
<comment type="subunit">
    <text evidence="1">Heterohexamer of three sigma-3 and three Mu-1 proteins. The RNA-binding form is probably a homodimer (By similarity).</text>
</comment>
<comment type="subcellular location">
    <subcellularLocation>
        <location evidence="2">Virion</location>
    </subcellularLocation>
    <subcellularLocation>
        <location evidence="2">Host cytoplasm</location>
    </subcellularLocation>
    <subcellularLocation>
        <location evidence="2">Host nucleus</location>
    </subcellularLocation>
    <text evidence="2">Found in the outer capsid. Each subunit is positioned with the small lobe anchoring it to the protein mu1 on the surface of the virion, and the large lobe, the site of initial cleavages during entry-related proteolytic disassembly, protruding outwards.</text>
</comment>
<comment type="PTM">
    <text evidence="2">Cleaved during virus the endosomal proteolytic disassembly of the outer capsid.</text>
</comment>
<comment type="similarity">
    <text evidence="3">Belongs to the orthoreovirus sigma-3 protein family.</text>
</comment>
<proteinExistence type="evidence at transcript level"/>
<sequence>MEVCLPNGHQIVDWINNAFEGRVSIYSAQQGWDKTISAQPDMMVCGGAVVCMHCLGVVGSLQRKLKHLPHHKCNQQLRQQDYVDVQFADRVTAHWKRGMLSFVSQMHAIMNDVTPEELERVRTDGGSLAELNWLQVDPGSMFRSIHSSWTDPLQVVEDLDTQLDRYWTALNLMIDSSDLVPNFMMRDPSHAFNGVKLEGEARQTQFSRTFDSRSNLEWGVMIYDYSELERDPLKGRAYRKEVVTPARDFGHFGLSHYSRATTPILGKMPAVFSGMLTGNCKMYPFIKGTAKLRTVKKLVDAVNHTWGSEKIRYALGPGGMTGWYNRTMQQAPIVLTPAALTMFPDMTKFGDLQYPIMIGDPAVLG</sequence>
<feature type="chain" id="PRO_0000222753" description="Outer capsid protein sigma-3">
    <location>
        <begin position="1"/>
        <end position="365"/>
    </location>
</feature>
<feature type="zinc finger region" description="CCHC-type" evidence="2">
    <location>
        <begin position="51"/>
        <end position="73"/>
    </location>
</feature>
<organism>
    <name type="scientific">Reovirus type 2 (strain D5/Jones)</name>
    <name type="common">T2J</name>
    <name type="synonym">Mammalian orthoreovirus 2</name>
    <dbReference type="NCBI Taxonomy" id="10885"/>
    <lineage>
        <taxon>Viruses</taxon>
        <taxon>Riboviria</taxon>
        <taxon>Orthornavirae</taxon>
        <taxon>Duplornaviricota</taxon>
        <taxon>Resentoviricetes</taxon>
        <taxon>Reovirales</taxon>
        <taxon>Spinareoviridae</taxon>
        <taxon>Orthoreovirus</taxon>
        <taxon>Mammalian orthoreovirus</taxon>
    </lineage>
</organism>